<gene>
    <name evidence="1" type="primary">fmt</name>
    <name type="ordered locus">MMAR_2215</name>
</gene>
<reference key="1">
    <citation type="journal article" date="2008" name="Genome Res.">
        <title>Insights from the complete genome sequence of Mycobacterium marinum on the evolution of Mycobacterium tuberculosis.</title>
        <authorList>
            <person name="Stinear T.P."/>
            <person name="Seemann T."/>
            <person name="Harrison P.F."/>
            <person name="Jenkin G.A."/>
            <person name="Davies J.K."/>
            <person name="Johnson P.D."/>
            <person name="Abdellah Z."/>
            <person name="Arrowsmith C."/>
            <person name="Chillingworth T."/>
            <person name="Churcher C."/>
            <person name="Clarke K."/>
            <person name="Cronin A."/>
            <person name="Davis P."/>
            <person name="Goodhead I."/>
            <person name="Holroyd N."/>
            <person name="Jagels K."/>
            <person name="Lord A."/>
            <person name="Moule S."/>
            <person name="Mungall K."/>
            <person name="Norbertczak H."/>
            <person name="Quail M.A."/>
            <person name="Rabbinowitsch E."/>
            <person name="Walker D."/>
            <person name="White B."/>
            <person name="Whitehead S."/>
            <person name="Small P.L."/>
            <person name="Brosch R."/>
            <person name="Ramakrishnan L."/>
            <person name="Fischbach M.A."/>
            <person name="Parkhill J."/>
            <person name="Cole S.T."/>
        </authorList>
    </citation>
    <scope>NUCLEOTIDE SEQUENCE [LARGE SCALE GENOMIC DNA]</scope>
    <source>
        <strain>ATCC BAA-535 / M</strain>
    </source>
</reference>
<proteinExistence type="inferred from homology"/>
<feature type="chain" id="PRO_1000098420" description="Methionyl-tRNA formyltransferase">
    <location>
        <begin position="1"/>
        <end position="312"/>
    </location>
</feature>
<feature type="binding site" evidence="1">
    <location>
        <begin position="110"/>
        <end position="113"/>
    </location>
    <ligand>
        <name>(6S)-5,6,7,8-tetrahydrofolate</name>
        <dbReference type="ChEBI" id="CHEBI:57453"/>
    </ligand>
</feature>
<protein>
    <recommendedName>
        <fullName evidence="1">Methionyl-tRNA formyltransferase</fullName>
        <ecNumber evidence="1">2.1.2.9</ecNumber>
    </recommendedName>
</protein>
<name>FMT_MYCMM</name>
<keyword id="KW-0648">Protein biosynthesis</keyword>
<keyword id="KW-1185">Reference proteome</keyword>
<keyword id="KW-0808">Transferase</keyword>
<accession>B2HP60</accession>
<sequence length="312" mass="32661">MRLVFAGTPETALPALHQLIDSPRHDVIAVLTRPDAASGRRGKPEPSPVARAALERDIPVLRPSRPNSAEFVAELSELAPQCCAVVAYGALLGDALLGVPPQGWVNLHFSLLPAWRGAAPVQAAIAAGDAVTGATTFQIEPSLDSGPVYGVVTETIRPTDTAGDLLGRLAVSGAELLSATLDGIAEGALTARPQPADGVTLAPKISVEQARVRWELPAPIIERRIRAVTPNPGAWTLIGDLRVKLGPVYLDAAVKPPGPLPPGAIQVDRKHVWVGTGSEPLRLGQVQPPGKKLMNAADWARGARLDPSVRAS</sequence>
<evidence type="ECO:0000255" key="1">
    <source>
        <dbReference type="HAMAP-Rule" id="MF_00182"/>
    </source>
</evidence>
<comment type="function">
    <text evidence="1">Attaches a formyl group to the free amino group of methionyl-tRNA(fMet). The formyl group appears to play a dual role in the initiator identity of N-formylmethionyl-tRNA by promoting its recognition by IF2 and preventing the misappropriation of this tRNA by the elongation apparatus.</text>
</comment>
<comment type="catalytic activity">
    <reaction evidence="1">
        <text>L-methionyl-tRNA(fMet) + (6R)-10-formyltetrahydrofolate = N-formyl-L-methionyl-tRNA(fMet) + (6S)-5,6,7,8-tetrahydrofolate + H(+)</text>
        <dbReference type="Rhea" id="RHEA:24380"/>
        <dbReference type="Rhea" id="RHEA-COMP:9952"/>
        <dbReference type="Rhea" id="RHEA-COMP:9953"/>
        <dbReference type="ChEBI" id="CHEBI:15378"/>
        <dbReference type="ChEBI" id="CHEBI:57453"/>
        <dbReference type="ChEBI" id="CHEBI:78530"/>
        <dbReference type="ChEBI" id="CHEBI:78844"/>
        <dbReference type="ChEBI" id="CHEBI:195366"/>
        <dbReference type="EC" id="2.1.2.9"/>
    </reaction>
</comment>
<comment type="similarity">
    <text evidence="1">Belongs to the Fmt family.</text>
</comment>
<dbReference type="EC" id="2.1.2.9" evidence="1"/>
<dbReference type="EMBL" id="CP000854">
    <property type="protein sequence ID" value="ACC40664.1"/>
    <property type="molecule type" value="Genomic_DNA"/>
</dbReference>
<dbReference type="RefSeq" id="WP_012393979.1">
    <property type="nucleotide sequence ID" value="NC_010612.1"/>
</dbReference>
<dbReference type="SMR" id="B2HP60"/>
<dbReference type="STRING" id="216594.MMAR_2215"/>
<dbReference type="KEGG" id="mmi:MMAR_2215"/>
<dbReference type="eggNOG" id="COG0223">
    <property type="taxonomic scope" value="Bacteria"/>
</dbReference>
<dbReference type="HOGENOM" id="CLU_033347_1_0_11"/>
<dbReference type="OrthoDB" id="9802815at2"/>
<dbReference type="Proteomes" id="UP000001190">
    <property type="component" value="Chromosome"/>
</dbReference>
<dbReference type="GO" id="GO:0005829">
    <property type="term" value="C:cytosol"/>
    <property type="evidence" value="ECO:0007669"/>
    <property type="project" value="TreeGrafter"/>
</dbReference>
<dbReference type="GO" id="GO:0004479">
    <property type="term" value="F:methionyl-tRNA formyltransferase activity"/>
    <property type="evidence" value="ECO:0007669"/>
    <property type="project" value="UniProtKB-UniRule"/>
</dbReference>
<dbReference type="CDD" id="cd08646">
    <property type="entry name" value="FMT_core_Met-tRNA-FMT_N"/>
    <property type="match status" value="1"/>
</dbReference>
<dbReference type="CDD" id="cd08704">
    <property type="entry name" value="Met_tRNA_FMT_C"/>
    <property type="match status" value="1"/>
</dbReference>
<dbReference type="FunFam" id="3.40.50.12230:FF:000001">
    <property type="entry name" value="Methionyl-tRNA formyltransferase"/>
    <property type="match status" value="1"/>
</dbReference>
<dbReference type="Gene3D" id="3.40.50.12230">
    <property type="match status" value="1"/>
</dbReference>
<dbReference type="HAMAP" id="MF_00182">
    <property type="entry name" value="Formyl_trans"/>
    <property type="match status" value="1"/>
</dbReference>
<dbReference type="InterPro" id="IPR005794">
    <property type="entry name" value="Fmt"/>
</dbReference>
<dbReference type="InterPro" id="IPR005793">
    <property type="entry name" value="Formyl_trans_C"/>
</dbReference>
<dbReference type="InterPro" id="IPR002376">
    <property type="entry name" value="Formyl_transf_N"/>
</dbReference>
<dbReference type="InterPro" id="IPR036477">
    <property type="entry name" value="Formyl_transf_N_sf"/>
</dbReference>
<dbReference type="InterPro" id="IPR011034">
    <property type="entry name" value="Formyl_transferase-like_C_sf"/>
</dbReference>
<dbReference type="InterPro" id="IPR044135">
    <property type="entry name" value="Met-tRNA-FMT_C"/>
</dbReference>
<dbReference type="InterPro" id="IPR041711">
    <property type="entry name" value="Met-tRNA-FMT_N"/>
</dbReference>
<dbReference type="NCBIfam" id="TIGR00460">
    <property type="entry name" value="fmt"/>
    <property type="match status" value="1"/>
</dbReference>
<dbReference type="PANTHER" id="PTHR11138">
    <property type="entry name" value="METHIONYL-TRNA FORMYLTRANSFERASE"/>
    <property type="match status" value="1"/>
</dbReference>
<dbReference type="PANTHER" id="PTHR11138:SF5">
    <property type="entry name" value="METHIONYL-TRNA FORMYLTRANSFERASE, MITOCHONDRIAL"/>
    <property type="match status" value="1"/>
</dbReference>
<dbReference type="Pfam" id="PF02911">
    <property type="entry name" value="Formyl_trans_C"/>
    <property type="match status" value="1"/>
</dbReference>
<dbReference type="Pfam" id="PF00551">
    <property type="entry name" value="Formyl_trans_N"/>
    <property type="match status" value="1"/>
</dbReference>
<dbReference type="SUPFAM" id="SSF50486">
    <property type="entry name" value="FMT C-terminal domain-like"/>
    <property type="match status" value="1"/>
</dbReference>
<dbReference type="SUPFAM" id="SSF53328">
    <property type="entry name" value="Formyltransferase"/>
    <property type="match status" value="1"/>
</dbReference>
<organism>
    <name type="scientific">Mycobacterium marinum (strain ATCC BAA-535 / M)</name>
    <dbReference type="NCBI Taxonomy" id="216594"/>
    <lineage>
        <taxon>Bacteria</taxon>
        <taxon>Bacillati</taxon>
        <taxon>Actinomycetota</taxon>
        <taxon>Actinomycetes</taxon>
        <taxon>Mycobacteriales</taxon>
        <taxon>Mycobacteriaceae</taxon>
        <taxon>Mycobacterium</taxon>
        <taxon>Mycobacterium ulcerans group</taxon>
    </lineage>
</organism>